<accession>P86831</accession>
<accession>O85077</accession>
<keyword id="KW-0067">ATP-binding</keyword>
<keyword id="KW-0436">Ligase</keyword>
<keyword id="KW-0547">Nucleotide-binding</keyword>
<reference evidence="6 7" key="1">
    <citation type="journal article" date="2001" name="J. Bacteriol.">
        <title>Isolation and characterization of IS1409, an insertion element of 4-chlorobenzoate-degrading Arthrobacter sp. strain TM1, and development of a system for transposon mutagenesis.</title>
        <authorList>
            <person name="Gartemann K.H."/>
            <person name="Eichenlaub R."/>
        </authorList>
    </citation>
    <scope>NUCLEOTIDE SEQUENCE [GENOMIC DNA]</scope>
    <source>
        <strain evidence="7">NCIB 12013 / TM1</strain>
    </source>
</reference>
<reference evidence="6" key="2">
    <citation type="journal article" date="2004" name="Biodegradation">
        <title>The purification and characterisation of 4-chlorobenzoate:CoA ligase and 4-chlorobenzoyl CoA dehalogenase from Arthrobacter sp. strain TM-1.</title>
        <authorList>
            <person name="Zhou L."/>
            <person name="Marks T.S."/>
            <person name="Poh R.P."/>
            <person name="Smith R.J."/>
            <person name="Chowdhry B.Z."/>
            <person name="Smith A.R."/>
        </authorList>
    </citation>
    <scope>FUNCTION</scope>
    <scope>CATALYTIC ACTIVITY</scope>
    <scope>COFACTOR</scope>
    <scope>BIOPHYSICOCHEMICAL PROPERTIES</scope>
    <scope>SUBUNIT</scope>
    <source>
        <strain evidence="4">NCIB 12013 / TM1</strain>
    </source>
</reference>
<name>CBCL1_ARTSP</name>
<dbReference type="EC" id="6.2.1.33"/>
<dbReference type="EMBL" id="AF042490">
    <property type="protein sequence ID" value="AAC28265.1"/>
    <property type="molecule type" value="Genomic_DNA"/>
</dbReference>
<dbReference type="SMR" id="P86831"/>
<dbReference type="UniPathway" id="UPA01011">
    <property type="reaction ID" value="UER01021"/>
</dbReference>
<dbReference type="GO" id="GO:0018861">
    <property type="term" value="F:4-chlorobenzoate-CoA ligase activity"/>
    <property type="evidence" value="ECO:0000314"/>
    <property type="project" value="UniProtKB"/>
</dbReference>
<dbReference type="GO" id="GO:0005524">
    <property type="term" value="F:ATP binding"/>
    <property type="evidence" value="ECO:0007669"/>
    <property type="project" value="UniProtKB-KW"/>
</dbReference>
<dbReference type="GO" id="GO:0031956">
    <property type="term" value="F:medium-chain fatty acid-CoA ligase activity"/>
    <property type="evidence" value="ECO:0007669"/>
    <property type="project" value="TreeGrafter"/>
</dbReference>
<dbReference type="GO" id="GO:0006631">
    <property type="term" value="P:fatty acid metabolic process"/>
    <property type="evidence" value="ECO:0007669"/>
    <property type="project" value="TreeGrafter"/>
</dbReference>
<dbReference type="CDD" id="cd05923">
    <property type="entry name" value="CBAL"/>
    <property type="match status" value="1"/>
</dbReference>
<dbReference type="FunFam" id="3.40.50.980:FF:000029">
    <property type="entry name" value="4-chlorobenzoate--CoA ligase"/>
    <property type="match status" value="1"/>
</dbReference>
<dbReference type="Gene3D" id="3.30.300.30">
    <property type="match status" value="1"/>
</dbReference>
<dbReference type="Gene3D" id="3.40.50.980">
    <property type="match status" value="2"/>
</dbReference>
<dbReference type="Gene3D" id="2.30.38.10">
    <property type="entry name" value="Luciferase, Domain 3"/>
    <property type="match status" value="1"/>
</dbReference>
<dbReference type="InterPro" id="IPR025110">
    <property type="entry name" value="AMP-bd_C"/>
</dbReference>
<dbReference type="InterPro" id="IPR045851">
    <property type="entry name" value="AMP-bd_C_sf"/>
</dbReference>
<dbReference type="InterPro" id="IPR020845">
    <property type="entry name" value="AMP-binding_CS"/>
</dbReference>
<dbReference type="InterPro" id="IPR000873">
    <property type="entry name" value="AMP-dep_synth/lig_dom"/>
</dbReference>
<dbReference type="PANTHER" id="PTHR43201">
    <property type="entry name" value="ACYL-COA SYNTHETASE"/>
    <property type="match status" value="1"/>
</dbReference>
<dbReference type="PANTHER" id="PTHR43201:SF5">
    <property type="entry name" value="MEDIUM-CHAIN ACYL-COA LIGASE ACSF2, MITOCHONDRIAL"/>
    <property type="match status" value="1"/>
</dbReference>
<dbReference type="Pfam" id="PF00501">
    <property type="entry name" value="AMP-binding"/>
    <property type="match status" value="1"/>
</dbReference>
<dbReference type="Pfam" id="PF13193">
    <property type="entry name" value="AMP-binding_C"/>
    <property type="match status" value="1"/>
</dbReference>
<dbReference type="SUPFAM" id="SSF56801">
    <property type="entry name" value="Acetyl-CoA synthetase-like"/>
    <property type="match status" value="1"/>
</dbReference>
<dbReference type="PROSITE" id="PS00455">
    <property type="entry name" value="AMP_BINDING"/>
    <property type="match status" value="1"/>
</dbReference>
<organism>
    <name type="scientific">Arthrobacter sp</name>
    <dbReference type="NCBI Taxonomy" id="1667"/>
    <lineage>
        <taxon>Bacteria</taxon>
        <taxon>Bacillati</taxon>
        <taxon>Actinomycetota</taxon>
        <taxon>Actinomycetes</taxon>
        <taxon>Micrococcales</taxon>
        <taxon>Micrococcaceae</taxon>
        <taxon>Arthrobacter</taxon>
    </lineage>
</organism>
<sequence>MRTAFELVAWSAHRQPGAVALLDPESGHRLTYSELLKRIEGVATVLASRGVVRDELVATAMANTLDHAIILLALNRLGAIPVIINPRLKADEMVQLIRRDNIRTVIRTVAEGKSGTPADIDGVEELTLSAEVLSEGLRIDGNATPAFEAPRPEDPAFVFYTSGTTGLPKGVVIPHRAIEPRVLFMSTQAGLRFGGHNNLLGLMPIHHVIGFFGVFLGSLAFNGTWIPVTAFDPAQAVKWVEELDVTCLFASPTHFDALLATSEFAPEKLKSVDSVIFAGAAINQSILKRLEKCLQVPIVDIYGTTETMNSLFNPDATQERGLRPGYHSRVQFASVSESPSVALPAGVEGELVVDASADATFTHYLNNPEATAAKIVDGWYRTGDSGYVDDSGRVILTGRIDDMINTGAENVHAEEVEQIISRHPAVVEAAVVGLPDTRWGEVVTAVVVVSEPLTADLLDQVCLDSELANFKRPRRYFVVNELPRNAAMKVSRRTLREYLGAHAADQPNPETGFIQFTIEESQ</sequence>
<comment type="function">
    <text evidence="1 4">Catalyzes the formation of chlorobenzoyl-CoA via a 2 step reaction. First 4-chlorobenzoate is adenylated by ATP, followed by acyl transfer from the 4-chlorobenzoyl-AMP intermediate to CoA (By similarity). Benzoate, 4-bromobenzoate, 4-iodobenzoate and 4-fluorobenzoate also act as substrates. Inactive towards 4-nitrobenzoate.</text>
</comment>
<comment type="catalytic activity">
    <reaction evidence="4">
        <text>4-chlorobenzoate + ATP + CoA = 4-chlorobenzoyl-CoA + AMP + diphosphate</text>
        <dbReference type="Rhea" id="RHEA:23220"/>
        <dbReference type="ChEBI" id="CHEBI:17861"/>
        <dbReference type="ChEBI" id="CHEBI:30616"/>
        <dbReference type="ChEBI" id="CHEBI:33019"/>
        <dbReference type="ChEBI" id="CHEBI:57287"/>
        <dbReference type="ChEBI" id="CHEBI:57354"/>
        <dbReference type="ChEBI" id="CHEBI:456215"/>
        <dbReference type="EC" id="6.2.1.33"/>
    </reaction>
</comment>
<comment type="cofactor">
    <cofactor evidence="4">
        <name>Mg(2+)</name>
        <dbReference type="ChEBI" id="CHEBI:18420"/>
    </cofactor>
</comment>
<comment type="biophysicochemical properties">
    <kinetics>
        <KM evidence="4">3.5 uM for 4-chlorobenzoate</KM>
        <KM evidence="4">30 uM for CoA</KM>
        <KM evidence="4">238 uM for ATP</KM>
    </kinetics>
    <phDependence>
        <text evidence="4">Optimum pH is 7.0.</text>
    </phDependence>
    <temperatureDependence>
        <text evidence="4">Optimum temperature is 25 degrees Celsius.</text>
    </temperatureDependence>
</comment>
<comment type="pathway">
    <text evidence="1">Xenobiotic degradation; 4-chlorobenzoate degradation; 4-hydroxybenzoate from 4-chlorobenzoate: step 2/3.</text>
</comment>
<comment type="subunit">
    <text evidence="4">Homodimer.</text>
</comment>
<comment type="similarity">
    <text evidence="3">Belongs to the ATP-dependent AMP-binding enzyme family.</text>
</comment>
<protein>
    <recommendedName>
        <fullName evidence="5 7">4-chlorobenzoate--CoA ligase</fullName>
        <shortName evidence="5">4-CBA:CoA ligase</shortName>
        <ecNumber>6.2.1.33</ecNumber>
    </recommendedName>
</protein>
<gene>
    <name evidence="7" type="primary">fcbA1</name>
</gene>
<evidence type="ECO:0000250" key="1">
    <source>
        <dbReference type="UniProtKB" id="A5JTM6"/>
    </source>
</evidence>
<evidence type="ECO:0000250" key="2">
    <source>
        <dbReference type="UniProtKB" id="Q08AH3"/>
    </source>
</evidence>
<evidence type="ECO:0000255" key="3"/>
<evidence type="ECO:0000269" key="4">
    <source>
    </source>
</evidence>
<evidence type="ECO:0000303" key="5">
    <source>
    </source>
</evidence>
<evidence type="ECO:0000305" key="6"/>
<evidence type="ECO:0000312" key="7">
    <source>
        <dbReference type="EMBL" id="AAC28265.1"/>
    </source>
</evidence>
<feature type="chain" id="PRO_0000402569" description="4-chlorobenzoate--CoA ligase">
    <location>
        <begin position="1"/>
        <end position="522"/>
    </location>
</feature>
<feature type="binding site" evidence="2">
    <location>
        <begin position="161"/>
        <end position="169"/>
    </location>
    <ligand>
        <name>ATP</name>
        <dbReference type="ChEBI" id="CHEBI:30616"/>
    </ligand>
</feature>
<feature type="binding site" evidence="2">
    <location>
        <begin position="300"/>
        <end position="305"/>
    </location>
    <ligand>
        <name>ATP</name>
        <dbReference type="ChEBI" id="CHEBI:30616"/>
    </ligand>
</feature>
<feature type="binding site" evidence="2">
    <location>
        <position position="410"/>
    </location>
    <ligand>
        <name>ATP</name>
        <dbReference type="ChEBI" id="CHEBI:30616"/>
    </ligand>
</feature>
<proteinExistence type="evidence at protein level"/>